<evidence type="ECO:0000255" key="1">
    <source>
        <dbReference type="PROSITE-ProRule" id="PRU00798"/>
    </source>
</evidence>
<sequence>LAAVSVDCSEYPKPACTMEYRPLCGSDNKSYDNKCNFCNAVVESNGTLTLSHFGKC</sequence>
<organism>
    <name type="scientific">Lophura diardi</name>
    <name type="common">Siamese fireback pheasant</name>
    <dbReference type="NCBI Taxonomy" id="30402"/>
    <lineage>
        <taxon>Eukaryota</taxon>
        <taxon>Metazoa</taxon>
        <taxon>Chordata</taxon>
        <taxon>Craniata</taxon>
        <taxon>Vertebrata</taxon>
        <taxon>Euteleostomi</taxon>
        <taxon>Archelosauria</taxon>
        <taxon>Archosauria</taxon>
        <taxon>Dinosauria</taxon>
        <taxon>Saurischia</taxon>
        <taxon>Theropoda</taxon>
        <taxon>Coelurosauria</taxon>
        <taxon>Aves</taxon>
        <taxon>Neognathae</taxon>
        <taxon>Galloanserae</taxon>
        <taxon>Galliformes</taxon>
        <taxon>Phasianidae</taxon>
        <taxon>Phasianinae</taxon>
        <taxon>Lophura</taxon>
    </lineage>
</organism>
<keyword id="KW-0903">Direct protein sequencing</keyword>
<keyword id="KW-1015">Disulfide bond</keyword>
<keyword id="KW-0325">Glycoprotein</keyword>
<keyword id="KW-0646">Protease inhibitor</keyword>
<keyword id="KW-0677">Repeat</keyword>
<keyword id="KW-0964">Secreted</keyword>
<keyword id="KW-0722">Serine protease inhibitor</keyword>
<feature type="chain" id="PRO_0000073133" description="Ovomucoid">
    <location>
        <begin position="1" status="less than"/>
        <end position="56" status="greater than"/>
    </location>
</feature>
<feature type="domain" description="Kazal-like" evidence="1">
    <location>
        <begin position="6"/>
        <end position="56"/>
    </location>
</feature>
<feature type="site" description="Reactive bond 3">
    <location>
        <begin position="18"/>
        <end position="19"/>
    </location>
</feature>
<feature type="glycosylation site" description="N-linked (GlcNAc...) asparagine">
    <location>
        <position position="45"/>
    </location>
</feature>
<feature type="disulfide bond">
    <location>
        <begin position="8"/>
        <end position="38"/>
    </location>
</feature>
<feature type="disulfide bond">
    <location>
        <begin position="16"/>
        <end position="35"/>
    </location>
</feature>
<feature type="disulfide bond">
    <location>
        <begin position="24"/>
        <end position="56"/>
    </location>
</feature>
<feature type="non-terminal residue">
    <location>
        <position position="1"/>
    </location>
</feature>
<feature type="non-terminal residue">
    <location>
        <position position="56"/>
    </location>
</feature>
<name>IOVO_LOPDI</name>
<accession>P67893</accession>
<accession>P05602</accession>
<reference key="1">
    <citation type="journal article" date="1993" name="J. Protein Chem.">
        <title>Amino acid sequences of ovomucoid third domains from 27 additional species of birds.</title>
        <authorList>
            <person name="Apostol I."/>
            <person name="Giletto A."/>
            <person name="Komiyama T."/>
            <person name="Zhang W."/>
            <person name="Laskowski M. Jr."/>
        </authorList>
    </citation>
    <scope>PROTEIN SEQUENCE</scope>
</reference>
<dbReference type="PIR" id="F61588">
    <property type="entry name" value="F61588"/>
</dbReference>
<dbReference type="SMR" id="P67893"/>
<dbReference type="GO" id="GO:0005615">
    <property type="term" value="C:extracellular space"/>
    <property type="evidence" value="ECO:0007669"/>
    <property type="project" value="UniProtKB-ARBA"/>
</dbReference>
<dbReference type="GO" id="GO:0004867">
    <property type="term" value="F:serine-type endopeptidase inhibitor activity"/>
    <property type="evidence" value="ECO:0007669"/>
    <property type="project" value="UniProtKB-KW"/>
</dbReference>
<dbReference type="CDD" id="cd00104">
    <property type="entry name" value="KAZAL_FS"/>
    <property type="match status" value="1"/>
</dbReference>
<dbReference type="FunFam" id="3.30.60.30:FF:000037">
    <property type="entry name" value="Ovomucoid"/>
    <property type="match status" value="1"/>
</dbReference>
<dbReference type="Gene3D" id="3.30.60.30">
    <property type="match status" value="1"/>
</dbReference>
<dbReference type="InterPro" id="IPR051597">
    <property type="entry name" value="Bifunctional_prot_inhibitor"/>
</dbReference>
<dbReference type="InterPro" id="IPR002350">
    <property type="entry name" value="Kazal_dom"/>
</dbReference>
<dbReference type="InterPro" id="IPR036058">
    <property type="entry name" value="Kazal_dom_sf"/>
</dbReference>
<dbReference type="InterPro" id="IPR001239">
    <property type="entry name" value="Prot_inh_Kazal-m"/>
</dbReference>
<dbReference type="PANTHER" id="PTHR47729:SF1">
    <property type="entry name" value="OVOMUCOID-LIKE-RELATED"/>
    <property type="match status" value="1"/>
</dbReference>
<dbReference type="PANTHER" id="PTHR47729">
    <property type="entry name" value="SERINE PEPTIDASE INHIBITOR, KAZAL TYPE 2, TANDEM DUPLICATE 1-RELATED"/>
    <property type="match status" value="1"/>
</dbReference>
<dbReference type="Pfam" id="PF00050">
    <property type="entry name" value="Kazal_1"/>
    <property type="match status" value="1"/>
</dbReference>
<dbReference type="PRINTS" id="PR00290">
    <property type="entry name" value="KAZALINHBTR"/>
</dbReference>
<dbReference type="SMART" id="SM00280">
    <property type="entry name" value="KAZAL"/>
    <property type="match status" value="1"/>
</dbReference>
<dbReference type="SUPFAM" id="SSF100895">
    <property type="entry name" value="Kazal-type serine protease inhibitors"/>
    <property type="match status" value="1"/>
</dbReference>
<dbReference type="PROSITE" id="PS00282">
    <property type="entry name" value="KAZAL_1"/>
    <property type="match status" value="1"/>
</dbReference>
<dbReference type="PROSITE" id="PS51465">
    <property type="entry name" value="KAZAL_2"/>
    <property type="match status" value="1"/>
</dbReference>
<proteinExistence type="evidence at protein level"/>
<comment type="subcellular location">
    <subcellularLocation>
        <location>Secreted</location>
    </subcellularLocation>
</comment>
<comment type="domain">
    <text>Avian ovomucoid consists of three homologous, tandem Kazal family inhibitory domains.</text>
</comment>
<protein>
    <recommendedName>
        <fullName>Ovomucoid</fullName>
    </recommendedName>
</protein>